<evidence type="ECO:0000269" key="1">
    <source>
    </source>
</evidence>
<evidence type="ECO:0000303" key="2">
    <source>
    </source>
</evidence>
<evidence type="ECO:0000305" key="3"/>
<reference evidence="3" key="1">
    <citation type="journal article" date="1997" name="J. Biol. Chem.">
        <title>Differential extraction and protein sequencing reveals major differences in patterns of primary cell wall proteins from plants.</title>
        <authorList>
            <person name="Robertson D."/>
            <person name="Mitchell G.P."/>
            <person name="Gilroy J.S."/>
            <person name="Gerrish C."/>
            <person name="Bolwell G.P."/>
            <person name="Slabas A.R."/>
        </authorList>
    </citation>
    <scope>PROTEIN SEQUENCE</scope>
    <scope>SUBCELLULAR LOCATION</scope>
</reference>
<protein>
    <recommendedName>
        <fullName>22 kDa cell wall protein</fullName>
    </recommendedName>
</protein>
<keyword id="KW-0134">Cell wall</keyword>
<keyword id="KW-0903">Direct protein sequencing</keyword>
<keyword id="KW-1185">Reference proteome</keyword>
<keyword id="KW-0964">Secreted</keyword>
<accession>P80813</accession>
<dbReference type="InParanoid" id="P80813"/>
<dbReference type="Proteomes" id="UP000004994">
    <property type="component" value="Unplaced"/>
</dbReference>
<dbReference type="GO" id="GO:0005576">
    <property type="term" value="C:extracellular region"/>
    <property type="evidence" value="ECO:0007669"/>
    <property type="project" value="UniProtKB-KW"/>
</dbReference>
<proteinExistence type="evidence at protein level"/>
<comment type="subcellular location">
    <subcellularLocation>
        <location evidence="1">Secreted</location>
        <location evidence="1">Cell wall</location>
    </subcellularLocation>
</comment>
<feature type="chain" id="PRO_0000079681" description="22 kDa cell wall protein">
    <location>
        <begin position="1"/>
        <end position="7" status="greater than"/>
    </location>
</feature>
<feature type="non-terminal residue" evidence="2">
    <location>
        <position position="7"/>
    </location>
</feature>
<organism>
    <name type="scientific">Solanum lycopersicum</name>
    <name type="common">Tomato</name>
    <name type="synonym">Lycopersicon esculentum</name>
    <dbReference type="NCBI Taxonomy" id="4081"/>
    <lineage>
        <taxon>Eukaryota</taxon>
        <taxon>Viridiplantae</taxon>
        <taxon>Streptophyta</taxon>
        <taxon>Embryophyta</taxon>
        <taxon>Tracheophyta</taxon>
        <taxon>Spermatophyta</taxon>
        <taxon>Magnoliopsida</taxon>
        <taxon>eudicotyledons</taxon>
        <taxon>Gunneridae</taxon>
        <taxon>Pentapetalae</taxon>
        <taxon>asterids</taxon>
        <taxon>lamiids</taxon>
        <taxon>Solanales</taxon>
        <taxon>Solanaceae</taxon>
        <taxon>Solanoideae</taxon>
        <taxon>Solaneae</taxon>
        <taxon>Solanum</taxon>
        <taxon>Solanum subgen. Lycopersicon</taxon>
    </lineage>
</organism>
<sequence length="7" mass="743">MNIPPGD</sequence>
<name>CWP17_SOLLC</name>